<evidence type="ECO:0000255" key="1">
    <source>
        <dbReference type="HAMAP-Rule" id="MF_01189"/>
    </source>
</evidence>
<proteinExistence type="inferred from homology"/>
<organism>
    <name type="scientific">Salmonella typhimurium (strain LT2 / SGSC1412 / ATCC 700720)</name>
    <dbReference type="NCBI Taxonomy" id="99287"/>
    <lineage>
        <taxon>Bacteria</taxon>
        <taxon>Pseudomonadati</taxon>
        <taxon>Pseudomonadota</taxon>
        <taxon>Gammaproteobacteria</taxon>
        <taxon>Enterobacterales</taxon>
        <taxon>Enterobacteriaceae</taxon>
        <taxon>Salmonella</taxon>
    </lineage>
</organism>
<gene>
    <name evidence="1" type="primary">nepI</name>
    <name type="ordered locus">STM3776</name>
</gene>
<reference key="1">
    <citation type="journal article" date="2001" name="Nature">
        <title>Complete genome sequence of Salmonella enterica serovar Typhimurium LT2.</title>
        <authorList>
            <person name="McClelland M."/>
            <person name="Sanderson K.E."/>
            <person name="Spieth J."/>
            <person name="Clifton S.W."/>
            <person name="Latreille P."/>
            <person name="Courtney L."/>
            <person name="Porwollik S."/>
            <person name="Ali J."/>
            <person name="Dante M."/>
            <person name="Du F."/>
            <person name="Hou S."/>
            <person name="Layman D."/>
            <person name="Leonard S."/>
            <person name="Nguyen C."/>
            <person name="Scott K."/>
            <person name="Holmes A."/>
            <person name="Grewal N."/>
            <person name="Mulvaney E."/>
            <person name="Ryan E."/>
            <person name="Sun H."/>
            <person name="Florea L."/>
            <person name="Miller W."/>
            <person name="Stoneking T."/>
            <person name="Nhan M."/>
            <person name="Waterston R."/>
            <person name="Wilson R.K."/>
        </authorList>
    </citation>
    <scope>NUCLEOTIDE SEQUENCE [LARGE SCALE GENOMIC DNA]</scope>
    <source>
        <strain>LT2 / SGSC1412 / ATCC 700720</strain>
    </source>
</reference>
<dbReference type="EMBL" id="AE006468">
    <property type="protein sequence ID" value="AAL22634.1"/>
    <property type="molecule type" value="Genomic_DNA"/>
</dbReference>
<dbReference type="RefSeq" id="WP_001004798.1">
    <property type="nucleotide sequence ID" value="NC_003197.2"/>
</dbReference>
<dbReference type="SMR" id="Q7CPG0"/>
<dbReference type="STRING" id="99287.STM3776"/>
<dbReference type="PaxDb" id="99287-STM3776"/>
<dbReference type="KEGG" id="stm:STM3776"/>
<dbReference type="PATRIC" id="fig|99287.12.peg.3996"/>
<dbReference type="HOGENOM" id="CLU_001265_61_1_6"/>
<dbReference type="OMA" id="HFAGSVY"/>
<dbReference type="PhylomeDB" id="Q7CPG0"/>
<dbReference type="BioCyc" id="SENT99287:STM3776-MONOMER"/>
<dbReference type="Proteomes" id="UP000001014">
    <property type="component" value="Chromosome"/>
</dbReference>
<dbReference type="GO" id="GO:0005886">
    <property type="term" value="C:plasma membrane"/>
    <property type="evidence" value="ECO:0000318"/>
    <property type="project" value="GO_Central"/>
</dbReference>
<dbReference type="GO" id="GO:0015297">
    <property type="term" value="F:antiporter activity"/>
    <property type="evidence" value="ECO:0007669"/>
    <property type="project" value="UniProtKB-KW"/>
</dbReference>
<dbReference type="GO" id="GO:0015211">
    <property type="term" value="F:purine nucleoside transmembrane transporter activity"/>
    <property type="evidence" value="ECO:0007669"/>
    <property type="project" value="UniProtKB-UniRule"/>
</dbReference>
<dbReference type="GO" id="GO:0022857">
    <property type="term" value="F:transmembrane transporter activity"/>
    <property type="evidence" value="ECO:0000318"/>
    <property type="project" value="GO_Central"/>
</dbReference>
<dbReference type="GO" id="GO:0055085">
    <property type="term" value="P:transmembrane transport"/>
    <property type="evidence" value="ECO:0000318"/>
    <property type="project" value="GO_Central"/>
</dbReference>
<dbReference type="CDD" id="cd17324">
    <property type="entry name" value="MFS_NepI_like"/>
    <property type="match status" value="1"/>
</dbReference>
<dbReference type="FunFam" id="1.20.1250.20:FF:000113">
    <property type="entry name" value="Purine ribonucleoside efflux pump NepI"/>
    <property type="match status" value="1"/>
</dbReference>
<dbReference type="Gene3D" id="1.20.1250.20">
    <property type="entry name" value="MFS general substrate transporter like domains"/>
    <property type="match status" value="1"/>
</dbReference>
<dbReference type="HAMAP" id="MF_01189">
    <property type="entry name" value="MFS_NepI"/>
    <property type="match status" value="1"/>
</dbReference>
<dbReference type="InterPro" id="IPR011701">
    <property type="entry name" value="MFS"/>
</dbReference>
<dbReference type="InterPro" id="IPR020846">
    <property type="entry name" value="MFS_dom"/>
</dbReference>
<dbReference type="InterPro" id="IPR050189">
    <property type="entry name" value="MFS_Efflux_Transporters"/>
</dbReference>
<dbReference type="InterPro" id="IPR023680">
    <property type="entry name" value="MFS_NepI"/>
</dbReference>
<dbReference type="InterPro" id="IPR036259">
    <property type="entry name" value="MFS_trans_sf"/>
</dbReference>
<dbReference type="NCBIfam" id="NF007578">
    <property type="entry name" value="PRK10213.1"/>
    <property type="match status" value="1"/>
</dbReference>
<dbReference type="PANTHER" id="PTHR43124">
    <property type="entry name" value="PURINE EFFLUX PUMP PBUE"/>
    <property type="match status" value="1"/>
</dbReference>
<dbReference type="PANTHER" id="PTHR43124:SF5">
    <property type="entry name" value="PURINE RIBONUCLEOSIDE EFFLUX PUMP NEPI"/>
    <property type="match status" value="1"/>
</dbReference>
<dbReference type="Pfam" id="PF07690">
    <property type="entry name" value="MFS_1"/>
    <property type="match status" value="1"/>
</dbReference>
<dbReference type="SUPFAM" id="SSF103473">
    <property type="entry name" value="MFS general substrate transporter"/>
    <property type="match status" value="1"/>
</dbReference>
<dbReference type="PROSITE" id="PS50850">
    <property type="entry name" value="MFS"/>
    <property type="match status" value="1"/>
</dbReference>
<keyword id="KW-0050">Antiport</keyword>
<keyword id="KW-0997">Cell inner membrane</keyword>
<keyword id="KW-1003">Cell membrane</keyword>
<keyword id="KW-0472">Membrane</keyword>
<keyword id="KW-1185">Reference proteome</keyword>
<keyword id="KW-0812">Transmembrane</keyword>
<keyword id="KW-1133">Transmembrane helix</keyword>
<keyword id="KW-0813">Transport</keyword>
<name>NEPI_SALTY</name>
<protein>
    <recommendedName>
        <fullName evidence="1">Purine ribonucleoside efflux pump NepI</fullName>
    </recommendedName>
</protein>
<accession>Q7CPG0</accession>
<sequence length="397" mass="41690">MNENIAEKFRADGVARPNWSAVFAVAFCVACLITVEFLPVSLLTPMAQDLGISEGVAGQSVTVTAFVAMFSSLFITQIIQATDRRYIVILFAVLLTASCLMVSFANSFTLLLLGRACLGLALGGFWAMSASLTMRLVPARTVPKALSVIFGAVSIALVIAAPLGSFLGGIIGWRNVFNAAAVMGVLCVIWVVKSLPSLPGEPSHQKQNMFSLLQRPGVMAGMIAIFMSFAGQFAFFTYIRPVYMNLAGFDVDGLTLVLLSFGIASFVGTSFSSYVLKRSVKLALAGAPLLLALSALTLIVWGSDKTVAAAIAIIWGLAFALVPVGWSTWITRSLADQAEKAGSIQVAVIQLANTCGAAVGGYALDNFGLLSPLALSGGLMLLTALVVAAKVRITPMS</sequence>
<comment type="function">
    <text evidence="1">Involved in the efflux of purine ribonucleosides, such as inosine and guanosine.</text>
</comment>
<comment type="catalytic activity">
    <reaction evidence="1">
        <text>inosine(in) + H(+)(out) = inosine(out) + H(+)(in)</text>
        <dbReference type="Rhea" id="RHEA:29211"/>
        <dbReference type="ChEBI" id="CHEBI:15378"/>
        <dbReference type="ChEBI" id="CHEBI:17596"/>
    </reaction>
    <physiologicalReaction direction="left-to-right" evidence="1">
        <dbReference type="Rhea" id="RHEA:29212"/>
    </physiologicalReaction>
</comment>
<comment type="catalytic activity">
    <reaction evidence="1">
        <text>guanosine(in) + H(+)(out) = guanosine(out) + H(+)(in)</text>
        <dbReference type="Rhea" id="RHEA:29583"/>
        <dbReference type="ChEBI" id="CHEBI:15378"/>
        <dbReference type="ChEBI" id="CHEBI:16750"/>
    </reaction>
    <physiologicalReaction direction="left-to-right" evidence="1">
        <dbReference type="Rhea" id="RHEA:29584"/>
    </physiologicalReaction>
</comment>
<comment type="subcellular location">
    <subcellularLocation>
        <location evidence="1">Cell inner membrane</location>
        <topology evidence="1">Multi-pass membrane protein</topology>
    </subcellularLocation>
</comment>
<comment type="similarity">
    <text evidence="1">Belongs to the major facilitator superfamily. DHA1 family. NepI (TC 2.A.1.2.26) subfamily.</text>
</comment>
<feature type="chain" id="PRO_0000294116" description="Purine ribonucleoside efflux pump NepI">
    <location>
        <begin position="1"/>
        <end position="397"/>
    </location>
</feature>
<feature type="topological domain" description="Cytoplasmic" evidence="1">
    <location>
        <begin position="1"/>
        <end position="21"/>
    </location>
</feature>
<feature type="transmembrane region" description="Helical" evidence="1">
    <location>
        <begin position="22"/>
        <end position="42"/>
    </location>
</feature>
<feature type="topological domain" description="Periplasmic" evidence="1">
    <location>
        <begin position="43"/>
        <end position="54"/>
    </location>
</feature>
<feature type="transmembrane region" description="Helical" evidence="1">
    <location>
        <begin position="55"/>
        <end position="75"/>
    </location>
</feature>
<feature type="topological domain" description="Cytoplasmic" evidence="1">
    <location>
        <begin position="76"/>
        <end position="85"/>
    </location>
</feature>
<feature type="transmembrane region" description="Helical" evidence="1">
    <location>
        <begin position="86"/>
        <end position="106"/>
    </location>
</feature>
<feature type="topological domain" description="Periplasmic" evidence="1">
    <location>
        <position position="107"/>
    </location>
</feature>
<feature type="transmembrane region" description="Helical" evidence="1">
    <location>
        <begin position="108"/>
        <end position="128"/>
    </location>
</feature>
<feature type="topological domain" description="Cytoplasmic" evidence="1">
    <location>
        <begin position="129"/>
        <end position="147"/>
    </location>
</feature>
<feature type="transmembrane region" description="Helical" evidence="1">
    <location>
        <begin position="148"/>
        <end position="168"/>
    </location>
</feature>
<feature type="topological domain" description="Periplasmic" evidence="1">
    <location>
        <begin position="169"/>
        <end position="175"/>
    </location>
</feature>
<feature type="transmembrane region" description="Helical" evidence="1">
    <location>
        <begin position="176"/>
        <end position="196"/>
    </location>
</feature>
<feature type="topological domain" description="Cytoplasmic" evidence="1">
    <location>
        <begin position="197"/>
        <end position="215"/>
    </location>
</feature>
<feature type="transmembrane region" description="Helical" evidence="1">
    <location>
        <begin position="216"/>
        <end position="236"/>
    </location>
</feature>
<feature type="topological domain" description="Periplasmic" evidence="1">
    <location>
        <begin position="237"/>
        <end position="255"/>
    </location>
</feature>
<feature type="transmembrane region" description="Helical" evidence="1">
    <location>
        <begin position="256"/>
        <end position="276"/>
    </location>
</feature>
<feature type="topological domain" description="Cytoplasmic" evidence="1">
    <location>
        <begin position="277"/>
        <end position="281"/>
    </location>
</feature>
<feature type="transmembrane region" description="Helical" evidence="1">
    <location>
        <begin position="282"/>
        <end position="302"/>
    </location>
</feature>
<feature type="topological domain" description="Periplasmic" evidence="1">
    <location>
        <begin position="303"/>
        <end position="305"/>
    </location>
</feature>
<feature type="transmembrane region" description="Helical" evidence="1">
    <location>
        <begin position="306"/>
        <end position="326"/>
    </location>
</feature>
<feature type="topological domain" description="Cytoplasmic" evidence="1">
    <location>
        <begin position="327"/>
        <end position="343"/>
    </location>
</feature>
<feature type="transmembrane region" description="Helical" evidence="1">
    <location>
        <begin position="344"/>
        <end position="364"/>
    </location>
</feature>
<feature type="topological domain" description="Periplasmic" evidence="1">
    <location>
        <begin position="365"/>
        <end position="366"/>
    </location>
</feature>
<feature type="transmembrane region" description="Helical" evidence="1">
    <location>
        <begin position="367"/>
        <end position="387"/>
    </location>
</feature>
<feature type="topological domain" description="Cytoplasmic" evidence="1">
    <location>
        <begin position="388"/>
        <end position="397"/>
    </location>
</feature>